<name>TIG_STAAT</name>
<feature type="chain" id="PRO_1000079062" description="Trigger factor">
    <location>
        <begin position="1"/>
        <end position="433"/>
    </location>
</feature>
<feature type="domain" description="PPIase FKBP-type" evidence="1">
    <location>
        <begin position="163"/>
        <end position="248"/>
    </location>
</feature>
<protein>
    <recommendedName>
        <fullName evidence="1">Trigger factor</fullName>
        <shortName evidence="1">TF</shortName>
        <ecNumber evidence="1">5.2.1.8</ecNumber>
    </recommendedName>
    <alternativeName>
        <fullName evidence="1">PPIase</fullName>
    </alternativeName>
</protein>
<proteinExistence type="inferred from homology"/>
<keyword id="KW-0131">Cell cycle</keyword>
<keyword id="KW-0132">Cell division</keyword>
<keyword id="KW-0143">Chaperone</keyword>
<keyword id="KW-0963">Cytoplasm</keyword>
<keyword id="KW-0413">Isomerase</keyword>
<keyword id="KW-0697">Rotamase</keyword>
<accession>A8Z2J6</accession>
<reference key="1">
    <citation type="journal article" date="2007" name="BMC Microbiol.">
        <title>Subtle genetic changes enhance virulence of methicillin resistant and sensitive Staphylococcus aureus.</title>
        <authorList>
            <person name="Highlander S.K."/>
            <person name="Hulten K.G."/>
            <person name="Qin X."/>
            <person name="Jiang H."/>
            <person name="Yerrapragada S."/>
            <person name="Mason E.O. Jr."/>
            <person name="Shang Y."/>
            <person name="Williams T.M."/>
            <person name="Fortunov R.M."/>
            <person name="Liu Y."/>
            <person name="Igboeli O."/>
            <person name="Petrosino J."/>
            <person name="Tirumalai M."/>
            <person name="Uzman A."/>
            <person name="Fox G.E."/>
            <person name="Cardenas A.M."/>
            <person name="Muzny D.M."/>
            <person name="Hemphill L."/>
            <person name="Ding Y."/>
            <person name="Dugan S."/>
            <person name="Blyth P.R."/>
            <person name="Buhay C.J."/>
            <person name="Dinh H.H."/>
            <person name="Hawes A.C."/>
            <person name="Holder M."/>
            <person name="Kovar C.L."/>
            <person name="Lee S.L."/>
            <person name="Liu W."/>
            <person name="Nazareth L.V."/>
            <person name="Wang Q."/>
            <person name="Zhou J."/>
            <person name="Kaplan S.L."/>
            <person name="Weinstock G.M."/>
        </authorList>
    </citation>
    <scope>NUCLEOTIDE SEQUENCE [LARGE SCALE GENOMIC DNA]</scope>
    <source>
        <strain>USA300 / TCH1516</strain>
    </source>
</reference>
<dbReference type="EC" id="5.2.1.8" evidence="1"/>
<dbReference type="EMBL" id="CP000730">
    <property type="protein sequence ID" value="ABX29674.1"/>
    <property type="molecule type" value="Genomic_DNA"/>
</dbReference>
<dbReference type="RefSeq" id="WP_000127573.1">
    <property type="nucleotide sequence ID" value="NC_010079.1"/>
</dbReference>
<dbReference type="SMR" id="A8Z2J6"/>
<dbReference type="KEGG" id="sax:USA300HOU_1667"/>
<dbReference type="HOGENOM" id="CLU_033058_3_2_9"/>
<dbReference type="GO" id="GO:0005737">
    <property type="term" value="C:cytoplasm"/>
    <property type="evidence" value="ECO:0007669"/>
    <property type="project" value="UniProtKB-SubCell"/>
</dbReference>
<dbReference type="GO" id="GO:0003755">
    <property type="term" value="F:peptidyl-prolyl cis-trans isomerase activity"/>
    <property type="evidence" value="ECO:0007669"/>
    <property type="project" value="UniProtKB-UniRule"/>
</dbReference>
<dbReference type="GO" id="GO:0044183">
    <property type="term" value="F:protein folding chaperone"/>
    <property type="evidence" value="ECO:0007669"/>
    <property type="project" value="TreeGrafter"/>
</dbReference>
<dbReference type="GO" id="GO:0043022">
    <property type="term" value="F:ribosome binding"/>
    <property type="evidence" value="ECO:0007669"/>
    <property type="project" value="TreeGrafter"/>
</dbReference>
<dbReference type="GO" id="GO:0051083">
    <property type="term" value="P:'de novo' cotranslational protein folding"/>
    <property type="evidence" value="ECO:0007669"/>
    <property type="project" value="TreeGrafter"/>
</dbReference>
<dbReference type="GO" id="GO:0051301">
    <property type="term" value="P:cell division"/>
    <property type="evidence" value="ECO:0007669"/>
    <property type="project" value="UniProtKB-KW"/>
</dbReference>
<dbReference type="GO" id="GO:0061077">
    <property type="term" value="P:chaperone-mediated protein folding"/>
    <property type="evidence" value="ECO:0007669"/>
    <property type="project" value="TreeGrafter"/>
</dbReference>
<dbReference type="GO" id="GO:0015031">
    <property type="term" value="P:protein transport"/>
    <property type="evidence" value="ECO:0007669"/>
    <property type="project" value="UniProtKB-UniRule"/>
</dbReference>
<dbReference type="GO" id="GO:0043335">
    <property type="term" value="P:protein unfolding"/>
    <property type="evidence" value="ECO:0007669"/>
    <property type="project" value="TreeGrafter"/>
</dbReference>
<dbReference type="FunFam" id="3.10.50.40:FF:000001">
    <property type="entry name" value="Trigger factor"/>
    <property type="match status" value="1"/>
</dbReference>
<dbReference type="FunFam" id="3.30.70.1050:FF:000002">
    <property type="entry name" value="Trigger factor"/>
    <property type="match status" value="1"/>
</dbReference>
<dbReference type="Gene3D" id="3.10.50.40">
    <property type="match status" value="1"/>
</dbReference>
<dbReference type="Gene3D" id="3.30.70.1050">
    <property type="entry name" value="Trigger factor ribosome-binding domain"/>
    <property type="match status" value="1"/>
</dbReference>
<dbReference type="Gene3D" id="1.10.3120.10">
    <property type="entry name" value="Trigger factor, C-terminal domain"/>
    <property type="match status" value="1"/>
</dbReference>
<dbReference type="HAMAP" id="MF_00303">
    <property type="entry name" value="Trigger_factor_Tig"/>
    <property type="match status" value="1"/>
</dbReference>
<dbReference type="InterPro" id="IPR046357">
    <property type="entry name" value="PPIase_dom_sf"/>
</dbReference>
<dbReference type="InterPro" id="IPR001179">
    <property type="entry name" value="PPIase_FKBP_dom"/>
</dbReference>
<dbReference type="InterPro" id="IPR005215">
    <property type="entry name" value="Trig_fac"/>
</dbReference>
<dbReference type="InterPro" id="IPR008880">
    <property type="entry name" value="Trigger_fac_C"/>
</dbReference>
<dbReference type="InterPro" id="IPR037041">
    <property type="entry name" value="Trigger_fac_C_sf"/>
</dbReference>
<dbReference type="InterPro" id="IPR008881">
    <property type="entry name" value="Trigger_fac_ribosome-bd_bac"/>
</dbReference>
<dbReference type="InterPro" id="IPR036611">
    <property type="entry name" value="Trigger_fac_ribosome-bd_sf"/>
</dbReference>
<dbReference type="InterPro" id="IPR027304">
    <property type="entry name" value="Trigger_fact/SurA_dom_sf"/>
</dbReference>
<dbReference type="NCBIfam" id="TIGR00115">
    <property type="entry name" value="tig"/>
    <property type="match status" value="1"/>
</dbReference>
<dbReference type="PANTHER" id="PTHR30560">
    <property type="entry name" value="TRIGGER FACTOR CHAPERONE AND PEPTIDYL-PROLYL CIS/TRANS ISOMERASE"/>
    <property type="match status" value="1"/>
</dbReference>
<dbReference type="PANTHER" id="PTHR30560:SF3">
    <property type="entry name" value="TRIGGER FACTOR-LIKE PROTEIN TIG, CHLOROPLASTIC"/>
    <property type="match status" value="1"/>
</dbReference>
<dbReference type="Pfam" id="PF00254">
    <property type="entry name" value="FKBP_C"/>
    <property type="match status" value="1"/>
</dbReference>
<dbReference type="Pfam" id="PF05698">
    <property type="entry name" value="Trigger_C"/>
    <property type="match status" value="1"/>
</dbReference>
<dbReference type="Pfam" id="PF05697">
    <property type="entry name" value="Trigger_N"/>
    <property type="match status" value="1"/>
</dbReference>
<dbReference type="PIRSF" id="PIRSF003095">
    <property type="entry name" value="Trigger_factor"/>
    <property type="match status" value="1"/>
</dbReference>
<dbReference type="SUPFAM" id="SSF54534">
    <property type="entry name" value="FKBP-like"/>
    <property type="match status" value="1"/>
</dbReference>
<dbReference type="SUPFAM" id="SSF109998">
    <property type="entry name" value="Triger factor/SurA peptide-binding domain-like"/>
    <property type="match status" value="1"/>
</dbReference>
<dbReference type="SUPFAM" id="SSF102735">
    <property type="entry name" value="Trigger factor ribosome-binding domain"/>
    <property type="match status" value="1"/>
</dbReference>
<dbReference type="PROSITE" id="PS50059">
    <property type="entry name" value="FKBP_PPIASE"/>
    <property type="match status" value="1"/>
</dbReference>
<evidence type="ECO:0000255" key="1">
    <source>
        <dbReference type="HAMAP-Rule" id="MF_00303"/>
    </source>
</evidence>
<gene>
    <name evidence="1" type="primary">tig</name>
    <name type="ordered locus">USA300HOU_1667</name>
</gene>
<sequence>MTATWEKKEGNEGLLTVTVPAEKVNKALDQAFKKVVKQINVPGFRKGKVPRPIFEQRFGVEALYQDAIDILLPDAYGEAIDETDIKPVAQPEVSVTQIEKGKDFIFEATVTVEPEVKLGDYKGLEIEKQETELSDDELQEAIDHSLGHLAEMVVKEDGVVENGDTVNIDFSGSVDGEEFEGGQAEGYDLEIGSGSFIPGFEEQLEGMKVDEEKDVVVTFPEEYHAEELAGKEATFKTKVNEIKFKEVPELTDEIANELDAEANTVDEYKENLRKRLAEQKATDAENVEKEEAITKATDNTTIDIPEAMVNTELDRMVSEFAQRIQQQGLDLQTYFQISGQDETQLREQMKDDAEQRVKTNLTLTAIAEAEKIEATDEDIDKELEKMSKQFNISVEDIKNTLGNTDIIKNDVRIQKVIDLLRDNAKFVEGTKED</sequence>
<organism>
    <name type="scientific">Staphylococcus aureus (strain USA300 / TCH1516)</name>
    <dbReference type="NCBI Taxonomy" id="451516"/>
    <lineage>
        <taxon>Bacteria</taxon>
        <taxon>Bacillati</taxon>
        <taxon>Bacillota</taxon>
        <taxon>Bacilli</taxon>
        <taxon>Bacillales</taxon>
        <taxon>Staphylococcaceae</taxon>
        <taxon>Staphylococcus</taxon>
    </lineage>
</organism>
<comment type="function">
    <text evidence="1">Involved in protein export. Acts as a chaperone by maintaining the newly synthesized protein in an open conformation. Functions as a peptidyl-prolyl cis-trans isomerase.</text>
</comment>
<comment type="catalytic activity">
    <reaction evidence="1">
        <text>[protein]-peptidylproline (omega=180) = [protein]-peptidylproline (omega=0)</text>
        <dbReference type="Rhea" id="RHEA:16237"/>
        <dbReference type="Rhea" id="RHEA-COMP:10747"/>
        <dbReference type="Rhea" id="RHEA-COMP:10748"/>
        <dbReference type="ChEBI" id="CHEBI:83833"/>
        <dbReference type="ChEBI" id="CHEBI:83834"/>
        <dbReference type="EC" id="5.2.1.8"/>
    </reaction>
</comment>
<comment type="subcellular location">
    <subcellularLocation>
        <location>Cytoplasm</location>
    </subcellularLocation>
    <text evidence="1">About half TF is bound to the ribosome near the polypeptide exit tunnel while the other half is free in the cytoplasm.</text>
</comment>
<comment type="domain">
    <text evidence="1">Consists of 3 domains; the N-terminus binds the ribosome, the middle domain has PPIase activity, while the C-terminus has intrinsic chaperone activity on its own.</text>
</comment>
<comment type="similarity">
    <text evidence="1">Belongs to the FKBP-type PPIase family. Tig subfamily.</text>
</comment>